<comment type="function">
    <text evidence="1">Catalyzes the GTP-dependent ribosomal translocation step during translation elongation. During this step, the ribosome changes from the pre-translocational (PRE) to the post-translocational (POST) state as the newly formed A-site-bound peptidyl-tRNA and P-site-bound deacylated tRNA move to the P and E sites, respectively. Catalyzes the coordinated movement of the two tRNA molecules, the mRNA and conformational changes in the ribosome.</text>
</comment>
<comment type="subcellular location">
    <subcellularLocation>
        <location evidence="1">Cytoplasm</location>
    </subcellularLocation>
</comment>
<comment type="similarity">
    <text evidence="1">Belongs to the TRAFAC class translation factor GTPase superfamily. Classic translation factor GTPase family. EF-G/EF-2 subfamily.</text>
</comment>
<protein>
    <recommendedName>
        <fullName evidence="1">Elongation factor G</fullName>
        <shortName evidence="1">EF-G</shortName>
    </recommendedName>
</protein>
<name>EFG_STRTD</name>
<organism>
    <name type="scientific">Streptococcus thermophilus (strain ATCC BAA-491 / LMD-9)</name>
    <dbReference type="NCBI Taxonomy" id="322159"/>
    <lineage>
        <taxon>Bacteria</taxon>
        <taxon>Bacillati</taxon>
        <taxon>Bacillota</taxon>
        <taxon>Bacilli</taxon>
        <taxon>Lactobacillales</taxon>
        <taxon>Streptococcaceae</taxon>
        <taxon>Streptococcus</taxon>
    </lineage>
</organism>
<proteinExistence type="inferred from homology"/>
<feature type="chain" id="PRO_1000008892" description="Elongation factor G">
    <location>
        <begin position="1"/>
        <end position="693"/>
    </location>
</feature>
<feature type="domain" description="tr-type G">
    <location>
        <begin position="8"/>
        <end position="282"/>
    </location>
</feature>
<feature type="binding site" evidence="1">
    <location>
        <begin position="17"/>
        <end position="24"/>
    </location>
    <ligand>
        <name>GTP</name>
        <dbReference type="ChEBI" id="CHEBI:37565"/>
    </ligand>
</feature>
<feature type="binding site" evidence="1">
    <location>
        <begin position="81"/>
        <end position="85"/>
    </location>
    <ligand>
        <name>GTP</name>
        <dbReference type="ChEBI" id="CHEBI:37565"/>
    </ligand>
</feature>
<feature type="binding site" evidence="1">
    <location>
        <begin position="135"/>
        <end position="138"/>
    </location>
    <ligand>
        <name>GTP</name>
        <dbReference type="ChEBI" id="CHEBI:37565"/>
    </ligand>
</feature>
<accession>Q03IS1</accession>
<reference key="1">
    <citation type="journal article" date="2006" name="Proc. Natl. Acad. Sci. U.S.A.">
        <title>Comparative genomics of the lactic acid bacteria.</title>
        <authorList>
            <person name="Makarova K.S."/>
            <person name="Slesarev A."/>
            <person name="Wolf Y.I."/>
            <person name="Sorokin A."/>
            <person name="Mirkin B."/>
            <person name="Koonin E.V."/>
            <person name="Pavlov A."/>
            <person name="Pavlova N."/>
            <person name="Karamychev V."/>
            <person name="Polouchine N."/>
            <person name="Shakhova V."/>
            <person name="Grigoriev I."/>
            <person name="Lou Y."/>
            <person name="Rohksar D."/>
            <person name="Lucas S."/>
            <person name="Huang K."/>
            <person name="Goodstein D.M."/>
            <person name="Hawkins T."/>
            <person name="Plengvidhya V."/>
            <person name="Welker D."/>
            <person name="Hughes J."/>
            <person name="Goh Y."/>
            <person name="Benson A."/>
            <person name="Baldwin K."/>
            <person name="Lee J.-H."/>
            <person name="Diaz-Muniz I."/>
            <person name="Dosti B."/>
            <person name="Smeianov V."/>
            <person name="Wechter W."/>
            <person name="Barabote R."/>
            <person name="Lorca G."/>
            <person name="Altermann E."/>
            <person name="Barrangou R."/>
            <person name="Ganesan B."/>
            <person name="Xie Y."/>
            <person name="Rawsthorne H."/>
            <person name="Tamir D."/>
            <person name="Parker C."/>
            <person name="Breidt F."/>
            <person name="Broadbent J.R."/>
            <person name="Hutkins R."/>
            <person name="O'Sullivan D."/>
            <person name="Steele J."/>
            <person name="Unlu G."/>
            <person name="Saier M.H. Jr."/>
            <person name="Klaenhammer T."/>
            <person name="Richardson P."/>
            <person name="Kozyavkin S."/>
            <person name="Weimer B.C."/>
            <person name="Mills D.A."/>
        </authorList>
    </citation>
    <scope>NUCLEOTIDE SEQUENCE [LARGE SCALE GENOMIC DNA]</scope>
    <source>
        <strain>ATCC BAA-491 / LMD-9</strain>
    </source>
</reference>
<keyword id="KW-0963">Cytoplasm</keyword>
<keyword id="KW-0251">Elongation factor</keyword>
<keyword id="KW-0342">GTP-binding</keyword>
<keyword id="KW-0547">Nucleotide-binding</keyword>
<keyword id="KW-0648">Protein biosynthesis</keyword>
<gene>
    <name evidence="1" type="primary">fusA</name>
    <name type="ordered locus">STER_1762</name>
</gene>
<dbReference type="EMBL" id="CP000419">
    <property type="protein sequence ID" value="ABJ66901.1"/>
    <property type="molecule type" value="Genomic_DNA"/>
</dbReference>
<dbReference type="RefSeq" id="WP_011226574.1">
    <property type="nucleotide sequence ID" value="NC_008532.1"/>
</dbReference>
<dbReference type="SMR" id="Q03IS1"/>
<dbReference type="GeneID" id="66899519"/>
<dbReference type="KEGG" id="ste:STER_1762"/>
<dbReference type="HOGENOM" id="CLU_002794_4_1_9"/>
<dbReference type="GO" id="GO:0005737">
    <property type="term" value="C:cytoplasm"/>
    <property type="evidence" value="ECO:0007669"/>
    <property type="project" value="UniProtKB-SubCell"/>
</dbReference>
<dbReference type="GO" id="GO:0005525">
    <property type="term" value="F:GTP binding"/>
    <property type="evidence" value="ECO:0007669"/>
    <property type="project" value="UniProtKB-UniRule"/>
</dbReference>
<dbReference type="GO" id="GO:0003924">
    <property type="term" value="F:GTPase activity"/>
    <property type="evidence" value="ECO:0007669"/>
    <property type="project" value="InterPro"/>
</dbReference>
<dbReference type="GO" id="GO:0003746">
    <property type="term" value="F:translation elongation factor activity"/>
    <property type="evidence" value="ECO:0007669"/>
    <property type="project" value="UniProtKB-UniRule"/>
</dbReference>
<dbReference type="GO" id="GO:0032790">
    <property type="term" value="P:ribosome disassembly"/>
    <property type="evidence" value="ECO:0007669"/>
    <property type="project" value="TreeGrafter"/>
</dbReference>
<dbReference type="CDD" id="cd01886">
    <property type="entry name" value="EF-G"/>
    <property type="match status" value="1"/>
</dbReference>
<dbReference type="CDD" id="cd16262">
    <property type="entry name" value="EFG_III"/>
    <property type="match status" value="1"/>
</dbReference>
<dbReference type="CDD" id="cd01434">
    <property type="entry name" value="EFG_mtEFG1_IV"/>
    <property type="match status" value="1"/>
</dbReference>
<dbReference type="CDD" id="cd03713">
    <property type="entry name" value="EFG_mtEFG_C"/>
    <property type="match status" value="1"/>
</dbReference>
<dbReference type="CDD" id="cd04088">
    <property type="entry name" value="EFG_mtEFG_II"/>
    <property type="match status" value="1"/>
</dbReference>
<dbReference type="FunFam" id="2.40.30.10:FF:000006">
    <property type="entry name" value="Elongation factor G"/>
    <property type="match status" value="1"/>
</dbReference>
<dbReference type="FunFam" id="3.30.230.10:FF:000003">
    <property type="entry name" value="Elongation factor G"/>
    <property type="match status" value="1"/>
</dbReference>
<dbReference type="FunFam" id="3.30.70.240:FF:000001">
    <property type="entry name" value="Elongation factor G"/>
    <property type="match status" value="1"/>
</dbReference>
<dbReference type="FunFam" id="3.30.70.870:FF:000001">
    <property type="entry name" value="Elongation factor G"/>
    <property type="match status" value="1"/>
</dbReference>
<dbReference type="FunFam" id="3.40.50.300:FF:000029">
    <property type="entry name" value="Elongation factor G"/>
    <property type="match status" value="1"/>
</dbReference>
<dbReference type="Gene3D" id="3.30.230.10">
    <property type="match status" value="1"/>
</dbReference>
<dbReference type="Gene3D" id="3.30.70.240">
    <property type="match status" value="1"/>
</dbReference>
<dbReference type="Gene3D" id="3.30.70.870">
    <property type="entry name" value="Elongation Factor G (Translational Gtpase), domain 3"/>
    <property type="match status" value="1"/>
</dbReference>
<dbReference type="Gene3D" id="3.40.50.300">
    <property type="entry name" value="P-loop containing nucleotide triphosphate hydrolases"/>
    <property type="match status" value="1"/>
</dbReference>
<dbReference type="Gene3D" id="2.40.30.10">
    <property type="entry name" value="Translation factors"/>
    <property type="match status" value="1"/>
</dbReference>
<dbReference type="HAMAP" id="MF_00054_B">
    <property type="entry name" value="EF_G_EF_2_B"/>
    <property type="match status" value="1"/>
</dbReference>
<dbReference type="InterPro" id="IPR041095">
    <property type="entry name" value="EFG_II"/>
</dbReference>
<dbReference type="InterPro" id="IPR009022">
    <property type="entry name" value="EFG_III"/>
</dbReference>
<dbReference type="InterPro" id="IPR035647">
    <property type="entry name" value="EFG_III/V"/>
</dbReference>
<dbReference type="InterPro" id="IPR047872">
    <property type="entry name" value="EFG_IV"/>
</dbReference>
<dbReference type="InterPro" id="IPR035649">
    <property type="entry name" value="EFG_V"/>
</dbReference>
<dbReference type="InterPro" id="IPR000640">
    <property type="entry name" value="EFG_V-like"/>
</dbReference>
<dbReference type="InterPro" id="IPR004161">
    <property type="entry name" value="EFTu-like_2"/>
</dbReference>
<dbReference type="InterPro" id="IPR031157">
    <property type="entry name" value="G_TR_CS"/>
</dbReference>
<dbReference type="InterPro" id="IPR027417">
    <property type="entry name" value="P-loop_NTPase"/>
</dbReference>
<dbReference type="InterPro" id="IPR020568">
    <property type="entry name" value="Ribosomal_Su5_D2-typ_SF"/>
</dbReference>
<dbReference type="InterPro" id="IPR014721">
    <property type="entry name" value="Ribsml_uS5_D2-typ_fold_subgr"/>
</dbReference>
<dbReference type="InterPro" id="IPR005225">
    <property type="entry name" value="Small_GTP-bd"/>
</dbReference>
<dbReference type="InterPro" id="IPR000795">
    <property type="entry name" value="T_Tr_GTP-bd_dom"/>
</dbReference>
<dbReference type="InterPro" id="IPR009000">
    <property type="entry name" value="Transl_B-barrel_sf"/>
</dbReference>
<dbReference type="InterPro" id="IPR004540">
    <property type="entry name" value="Transl_elong_EFG/EF2"/>
</dbReference>
<dbReference type="InterPro" id="IPR005517">
    <property type="entry name" value="Transl_elong_EFG/EF2_IV"/>
</dbReference>
<dbReference type="NCBIfam" id="TIGR00484">
    <property type="entry name" value="EF-G"/>
    <property type="match status" value="1"/>
</dbReference>
<dbReference type="NCBIfam" id="NF009379">
    <property type="entry name" value="PRK12740.1-3"/>
    <property type="match status" value="1"/>
</dbReference>
<dbReference type="NCBIfam" id="NF009381">
    <property type="entry name" value="PRK12740.1-5"/>
    <property type="match status" value="1"/>
</dbReference>
<dbReference type="NCBIfam" id="TIGR00231">
    <property type="entry name" value="small_GTP"/>
    <property type="match status" value="1"/>
</dbReference>
<dbReference type="PANTHER" id="PTHR43261:SF1">
    <property type="entry name" value="RIBOSOME-RELEASING FACTOR 2, MITOCHONDRIAL"/>
    <property type="match status" value="1"/>
</dbReference>
<dbReference type="PANTHER" id="PTHR43261">
    <property type="entry name" value="TRANSLATION ELONGATION FACTOR G-RELATED"/>
    <property type="match status" value="1"/>
</dbReference>
<dbReference type="Pfam" id="PF00679">
    <property type="entry name" value="EFG_C"/>
    <property type="match status" value="1"/>
</dbReference>
<dbReference type="Pfam" id="PF14492">
    <property type="entry name" value="EFG_III"/>
    <property type="match status" value="1"/>
</dbReference>
<dbReference type="Pfam" id="PF03764">
    <property type="entry name" value="EFG_IV"/>
    <property type="match status" value="1"/>
</dbReference>
<dbReference type="Pfam" id="PF00009">
    <property type="entry name" value="GTP_EFTU"/>
    <property type="match status" value="1"/>
</dbReference>
<dbReference type="Pfam" id="PF03144">
    <property type="entry name" value="GTP_EFTU_D2"/>
    <property type="match status" value="1"/>
</dbReference>
<dbReference type="PRINTS" id="PR00315">
    <property type="entry name" value="ELONGATNFCT"/>
</dbReference>
<dbReference type="SMART" id="SM00838">
    <property type="entry name" value="EFG_C"/>
    <property type="match status" value="1"/>
</dbReference>
<dbReference type="SMART" id="SM00889">
    <property type="entry name" value="EFG_IV"/>
    <property type="match status" value="1"/>
</dbReference>
<dbReference type="SUPFAM" id="SSF54980">
    <property type="entry name" value="EF-G C-terminal domain-like"/>
    <property type="match status" value="2"/>
</dbReference>
<dbReference type="SUPFAM" id="SSF52540">
    <property type="entry name" value="P-loop containing nucleoside triphosphate hydrolases"/>
    <property type="match status" value="1"/>
</dbReference>
<dbReference type="SUPFAM" id="SSF54211">
    <property type="entry name" value="Ribosomal protein S5 domain 2-like"/>
    <property type="match status" value="1"/>
</dbReference>
<dbReference type="SUPFAM" id="SSF50447">
    <property type="entry name" value="Translation proteins"/>
    <property type="match status" value="1"/>
</dbReference>
<dbReference type="PROSITE" id="PS00301">
    <property type="entry name" value="G_TR_1"/>
    <property type="match status" value="1"/>
</dbReference>
<dbReference type="PROSITE" id="PS51722">
    <property type="entry name" value="G_TR_2"/>
    <property type="match status" value="1"/>
</dbReference>
<sequence>MAREFSLAKTRNIGIMAHVDAGKTTTTERILYYTGKIHKIGETHEGASQMDWMEQEQERGITITSAATTAQWNGHRVNIIDTPGHVDFTIEVQRSLRVLDGAVTVLDSQSGVEPQTETVWRQATEYGVPRIVFANKMDKIGADFLYSVSTLHDRLQANAHPIQLPIGAEDDFRGIIDLIKMKAEIYTNDLGTDILEEDIPAEYVDQANEYREKLIEAVAETDEDLMMKYLEGEEITNDELKAAIRRATINVEFFPVLCGSAFKNKGVQLMLDAVIDYLPSPLDIPAIKGINPDTGEEETRPASDEAPFAALAFKIMTDPFVGRLTFIRVYSGILQSGSYVMNTSKGKRERIGRILQMHANSRQEIEQVYAGDIAAAIGLKDTTTGDSLTDEKAKVILESIEVPEPVIQLMVEPKTKADQDKMAIGLQKLAEEDPTFRVETNPETGETVISGMGELHLDVLVDRLKREHKVEANVGAPQVSYRETFRAATQARGFFKRQSGGKGQFGDVWIEFTPNEEGKGFEFENAIVGGVVPREFIPAVEKGLEESMANGVLAGYPMVDIKAKLYDGSYHDVDSSETAFKIAASLALKEAAKTAQPTILEPMMLVTITVPEENLGDVMGHVTARRGRVDGMEAHGNTQIVRAYVPLAEMFGYATTLRSATQGRGTFMMVFDHYEDVPKSVQEEIIKKNSGEA</sequence>
<evidence type="ECO:0000255" key="1">
    <source>
        <dbReference type="HAMAP-Rule" id="MF_00054"/>
    </source>
</evidence>